<evidence type="ECO:0000255" key="1"/>
<evidence type="ECO:0000305" key="2"/>
<name>YOHD_ECOLI</name>
<protein>
    <recommendedName>
        <fullName>Inner membrane protein YohD</fullName>
    </recommendedName>
</protein>
<accession>P33366</accession>
<accession>P76436</accession>
<accession>Q2MAU3</accession>
<keyword id="KW-0997">Cell inner membrane</keyword>
<keyword id="KW-1003">Cell membrane</keyword>
<keyword id="KW-0472">Membrane</keyword>
<keyword id="KW-1185">Reference proteome</keyword>
<keyword id="KW-0812">Transmembrane</keyword>
<keyword id="KW-1133">Transmembrane helix</keyword>
<gene>
    <name type="primary">yohD</name>
    <name type="ordered locus">b2136</name>
    <name type="ordered locus">JW2124</name>
</gene>
<sequence length="192" mass="21445">MDLNTLISQYGYAALVIGSLAEGETVTLLGGVAAHQGLLKFPLVVLSVALGGMIGDQVLYLCGRRFGGKLLRRFSKHQDKIERAQKLIQRHPYLFVIGTRFMYGFRVIGPTLIGASQLPPKIFLPLNILGAFAWALIFTTIGYAGGQVIAPWLHNLDQHLKHWVWLILVVVLVVGVRWWLKRRGKKKPDHQA</sequence>
<reference key="1">
    <citation type="submission" date="1993-10" db="EMBL/GenBank/DDBJ databases">
        <title>Automated multiplex sequencing of the E.coli genome.</title>
        <authorList>
            <person name="Richterich P."/>
            <person name="Lakey N."/>
            <person name="Gryan G."/>
            <person name="Jaehn L."/>
            <person name="Mintz L."/>
            <person name="Robison K."/>
            <person name="Church G.M."/>
        </authorList>
    </citation>
    <scope>NUCLEOTIDE SEQUENCE [LARGE SCALE GENOMIC DNA]</scope>
    <source>
        <strain>K12 / BHB2600</strain>
    </source>
</reference>
<reference key="2">
    <citation type="journal article" date="1997" name="Science">
        <title>The complete genome sequence of Escherichia coli K-12.</title>
        <authorList>
            <person name="Blattner F.R."/>
            <person name="Plunkett G. III"/>
            <person name="Bloch C.A."/>
            <person name="Perna N.T."/>
            <person name="Burland V."/>
            <person name="Riley M."/>
            <person name="Collado-Vides J."/>
            <person name="Glasner J.D."/>
            <person name="Rode C.K."/>
            <person name="Mayhew G.F."/>
            <person name="Gregor J."/>
            <person name="Davis N.W."/>
            <person name="Kirkpatrick H.A."/>
            <person name="Goeden M.A."/>
            <person name="Rose D.J."/>
            <person name="Mau B."/>
            <person name="Shao Y."/>
        </authorList>
    </citation>
    <scope>NUCLEOTIDE SEQUENCE [LARGE SCALE GENOMIC DNA]</scope>
    <source>
        <strain>K12 / MG1655 / ATCC 47076</strain>
    </source>
</reference>
<reference key="3">
    <citation type="journal article" date="2006" name="Mol. Syst. Biol.">
        <title>Highly accurate genome sequences of Escherichia coli K-12 strains MG1655 and W3110.</title>
        <authorList>
            <person name="Hayashi K."/>
            <person name="Morooka N."/>
            <person name="Yamamoto Y."/>
            <person name="Fujita K."/>
            <person name="Isono K."/>
            <person name="Choi S."/>
            <person name="Ohtsubo E."/>
            <person name="Baba T."/>
            <person name="Wanner B.L."/>
            <person name="Mori H."/>
            <person name="Horiuchi T."/>
        </authorList>
    </citation>
    <scope>NUCLEOTIDE SEQUENCE [LARGE SCALE GENOMIC DNA]</scope>
    <source>
        <strain>K12 / W3110 / ATCC 27325 / DSM 5911</strain>
    </source>
</reference>
<reference key="4">
    <citation type="journal article" date="2005" name="Science">
        <title>Global topology analysis of the Escherichia coli inner membrane proteome.</title>
        <authorList>
            <person name="Daley D.O."/>
            <person name="Rapp M."/>
            <person name="Granseth E."/>
            <person name="Melen K."/>
            <person name="Drew D."/>
            <person name="von Heijne G."/>
        </authorList>
    </citation>
    <scope>TOPOLOGY [LARGE SCALE ANALYSIS]</scope>
    <source>
        <strain>K12 / MG1655 / ATCC 47076</strain>
    </source>
</reference>
<proteinExistence type="evidence at protein level"/>
<feature type="chain" id="PRO_0000161416" description="Inner membrane protein YohD">
    <location>
        <begin position="1"/>
        <end position="192"/>
    </location>
</feature>
<feature type="topological domain" description="Periplasmic" evidence="1">
    <location>
        <begin position="1"/>
        <end position="40"/>
    </location>
</feature>
<feature type="transmembrane region" description="Helical" evidence="1">
    <location>
        <begin position="41"/>
        <end position="61"/>
    </location>
</feature>
<feature type="topological domain" description="Cytoplasmic" evidence="1">
    <location>
        <begin position="62"/>
        <end position="121"/>
    </location>
</feature>
<feature type="transmembrane region" description="Helical" evidence="1">
    <location>
        <begin position="122"/>
        <end position="142"/>
    </location>
</feature>
<feature type="topological domain" description="Periplasmic" evidence="1">
    <location>
        <begin position="143"/>
        <end position="159"/>
    </location>
</feature>
<feature type="transmembrane region" description="Helical" evidence="1">
    <location>
        <begin position="160"/>
        <end position="180"/>
    </location>
</feature>
<feature type="topological domain" description="Cytoplasmic" evidence="1">
    <location>
        <begin position="181"/>
        <end position="192"/>
    </location>
</feature>
<dbReference type="EMBL" id="U00007">
    <property type="protein sequence ID" value="AAA60498.1"/>
    <property type="molecule type" value="Genomic_DNA"/>
</dbReference>
<dbReference type="EMBL" id="U00096">
    <property type="protein sequence ID" value="AAC75197.2"/>
    <property type="molecule type" value="Genomic_DNA"/>
</dbReference>
<dbReference type="EMBL" id="AP009048">
    <property type="protein sequence ID" value="BAE76613.1"/>
    <property type="molecule type" value="Genomic_DNA"/>
</dbReference>
<dbReference type="PIR" id="G64981">
    <property type="entry name" value="G64981"/>
</dbReference>
<dbReference type="RefSeq" id="NP_416640.2">
    <property type="nucleotide sequence ID" value="NC_000913.3"/>
</dbReference>
<dbReference type="RefSeq" id="WP_001296821.1">
    <property type="nucleotide sequence ID" value="NZ_STEB01000002.1"/>
</dbReference>
<dbReference type="BioGRID" id="4259177">
    <property type="interactions" value="87"/>
</dbReference>
<dbReference type="DIP" id="DIP-12805N"/>
<dbReference type="FunCoup" id="P33366">
    <property type="interactions" value="66"/>
</dbReference>
<dbReference type="IntAct" id="P33366">
    <property type="interactions" value="1"/>
</dbReference>
<dbReference type="STRING" id="511145.b2136"/>
<dbReference type="PaxDb" id="511145-b2136"/>
<dbReference type="EnsemblBacteria" id="AAC75197">
    <property type="protein sequence ID" value="AAC75197"/>
    <property type="gene ID" value="b2136"/>
</dbReference>
<dbReference type="GeneID" id="946661"/>
<dbReference type="KEGG" id="ecj:JW2124"/>
<dbReference type="KEGG" id="eco:b2136"/>
<dbReference type="KEGG" id="ecoc:C3026_11975"/>
<dbReference type="PATRIC" id="fig|1411691.4.peg.106"/>
<dbReference type="EchoBASE" id="EB1954"/>
<dbReference type="eggNOG" id="COG0586">
    <property type="taxonomic scope" value="Bacteria"/>
</dbReference>
<dbReference type="HOGENOM" id="CLU_044208_7_2_6"/>
<dbReference type="InParanoid" id="P33366"/>
<dbReference type="OMA" id="FMYGFRI"/>
<dbReference type="OrthoDB" id="948134at2"/>
<dbReference type="PhylomeDB" id="P33366"/>
<dbReference type="BioCyc" id="EcoCyc:EG12017-MONOMER"/>
<dbReference type="PRO" id="PR:P33366"/>
<dbReference type="Proteomes" id="UP000000625">
    <property type="component" value="Chromosome"/>
</dbReference>
<dbReference type="GO" id="GO:0005886">
    <property type="term" value="C:plasma membrane"/>
    <property type="evidence" value="ECO:0000314"/>
    <property type="project" value="EcoCyc"/>
</dbReference>
<dbReference type="GO" id="GO:0043093">
    <property type="term" value="P:FtsZ-dependent cytokinesis"/>
    <property type="evidence" value="ECO:0000316"/>
    <property type="project" value="EcoCyc"/>
</dbReference>
<dbReference type="InterPro" id="IPR051311">
    <property type="entry name" value="DedA_domain"/>
</dbReference>
<dbReference type="InterPro" id="IPR032816">
    <property type="entry name" value="VTT_dom"/>
</dbReference>
<dbReference type="PANTHER" id="PTHR42709">
    <property type="entry name" value="ALKALINE PHOSPHATASE LIKE PROTEIN"/>
    <property type="match status" value="1"/>
</dbReference>
<dbReference type="PANTHER" id="PTHR42709:SF2">
    <property type="entry name" value="INNER MEMBRANE PROTEIN YOHD"/>
    <property type="match status" value="1"/>
</dbReference>
<dbReference type="Pfam" id="PF09335">
    <property type="entry name" value="VTT_dom"/>
    <property type="match status" value="1"/>
</dbReference>
<organism>
    <name type="scientific">Escherichia coli (strain K12)</name>
    <dbReference type="NCBI Taxonomy" id="83333"/>
    <lineage>
        <taxon>Bacteria</taxon>
        <taxon>Pseudomonadati</taxon>
        <taxon>Pseudomonadota</taxon>
        <taxon>Gammaproteobacteria</taxon>
        <taxon>Enterobacterales</taxon>
        <taxon>Enterobacteriaceae</taxon>
        <taxon>Escherichia</taxon>
    </lineage>
</organism>
<comment type="subcellular location">
    <subcellularLocation>
        <location>Cell inner membrane</location>
        <topology>Multi-pass membrane protein</topology>
    </subcellularLocation>
</comment>
<comment type="similarity">
    <text evidence="2">Belongs to the DedA family.</text>
</comment>